<evidence type="ECO:0000255" key="1">
    <source>
        <dbReference type="HAMAP-Rule" id="MF_00154"/>
    </source>
</evidence>
<proteinExistence type="inferred from homology"/>
<organism>
    <name type="scientific">Escherichia coli (strain K12 / DH10B)</name>
    <dbReference type="NCBI Taxonomy" id="316385"/>
    <lineage>
        <taxon>Bacteria</taxon>
        <taxon>Pseudomonadati</taxon>
        <taxon>Pseudomonadota</taxon>
        <taxon>Gammaproteobacteria</taxon>
        <taxon>Enterobacterales</taxon>
        <taxon>Enterobacteriaceae</taxon>
        <taxon>Escherichia</taxon>
    </lineage>
</organism>
<keyword id="KW-0997">Cell inner membrane</keyword>
<keyword id="KW-1003">Cell membrane</keyword>
<keyword id="KW-0350">Heme biosynthesis</keyword>
<keyword id="KW-0472">Membrane</keyword>
<keyword id="KW-0808">Transferase</keyword>
<keyword id="KW-0812">Transmembrane</keyword>
<keyword id="KW-1133">Transmembrane helix</keyword>
<gene>
    <name evidence="1" type="primary">cyoE</name>
    <name type="ordered locus">ECDH10B_0384</name>
</gene>
<reference key="1">
    <citation type="journal article" date="2008" name="J. Bacteriol.">
        <title>The complete genome sequence of Escherichia coli DH10B: insights into the biology of a laboratory workhorse.</title>
        <authorList>
            <person name="Durfee T."/>
            <person name="Nelson R."/>
            <person name="Baldwin S."/>
            <person name="Plunkett G. III"/>
            <person name="Burland V."/>
            <person name="Mau B."/>
            <person name="Petrosino J.F."/>
            <person name="Qin X."/>
            <person name="Muzny D.M."/>
            <person name="Ayele M."/>
            <person name="Gibbs R.A."/>
            <person name="Csorgo B."/>
            <person name="Posfai G."/>
            <person name="Weinstock G.M."/>
            <person name="Blattner F.R."/>
        </authorList>
    </citation>
    <scope>NUCLEOTIDE SEQUENCE [LARGE SCALE GENOMIC DNA]</scope>
    <source>
        <strain>K12 / DH10B</strain>
    </source>
</reference>
<name>CYOE_ECODH</name>
<dbReference type="EC" id="2.5.1.141" evidence="1"/>
<dbReference type="EMBL" id="CP000948">
    <property type="protein sequence ID" value="ACB01556.1"/>
    <property type="molecule type" value="Genomic_DNA"/>
</dbReference>
<dbReference type="RefSeq" id="WP_000971336.1">
    <property type="nucleotide sequence ID" value="NC_010473.1"/>
</dbReference>
<dbReference type="SMR" id="B1XFL6"/>
<dbReference type="GeneID" id="75202853"/>
<dbReference type="KEGG" id="ecd:ECDH10B_0384"/>
<dbReference type="HOGENOM" id="CLU_029631_0_0_6"/>
<dbReference type="UniPathway" id="UPA00834">
    <property type="reaction ID" value="UER00712"/>
</dbReference>
<dbReference type="GO" id="GO:0005886">
    <property type="term" value="C:plasma membrane"/>
    <property type="evidence" value="ECO:0007669"/>
    <property type="project" value="UniProtKB-SubCell"/>
</dbReference>
<dbReference type="GO" id="GO:0008495">
    <property type="term" value="F:protoheme IX farnesyltransferase activity"/>
    <property type="evidence" value="ECO:0007669"/>
    <property type="project" value="UniProtKB-UniRule"/>
</dbReference>
<dbReference type="GO" id="GO:0048034">
    <property type="term" value="P:heme O biosynthetic process"/>
    <property type="evidence" value="ECO:0007669"/>
    <property type="project" value="UniProtKB-UniRule"/>
</dbReference>
<dbReference type="CDD" id="cd13957">
    <property type="entry name" value="PT_UbiA_Cox10"/>
    <property type="match status" value="1"/>
</dbReference>
<dbReference type="FunFam" id="1.10.357.140:FF:000001">
    <property type="entry name" value="Protoheme IX farnesyltransferase"/>
    <property type="match status" value="1"/>
</dbReference>
<dbReference type="Gene3D" id="1.10.357.140">
    <property type="entry name" value="UbiA prenyltransferase"/>
    <property type="match status" value="1"/>
</dbReference>
<dbReference type="HAMAP" id="MF_00154">
    <property type="entry name" value="CyoE_CtaB"/>
    <property type="match status" value="1"/>
</dbReference>
<dbReference type="InterPro" id="IPR006369">
    <property type="entry name" value="Protohaem_IX_farnesylTrfase"/>
</dbReference>
<dbReference type="InterPro" id="IPR000537">
    <property type="entry name" value="UbiA_prenyltransferase"/>
</dbReference>
<dbReference type="InterPro" id="IPR030470">
    <property type="entry name" value="UbiA_prenylTrfase_CS"/>
</dbReference>
<dbReference type="InterPro" id="IPR044878">
    <property type="entry name" value="UbiA_sf"/>
</dbReference>
<dbReference type="NCBIfam" id="TIGR01473">
    <property type="entry name" value="cyoE_ctaB"/>
    <property type="match status" value="1"/>
</dbReference>
<dbReference type="NCBIfam" id="NF003348">
    <property type="entry name" value="PRK04375.1-1"/>
    <property type="match status" value="1"/>
</dbReference>
<dbReference type="PANTHER" id="PTHR43448">
    <property type="entry name" value="PROTOHEME IX FARNESYLTRANSFERASE, MITOCHONDRIAL"/>
    <property type="match status" value="1"/>
</dbReference>
<dbReference type="PANTHER" id="PTHR43448:SF2">
    <property type="entry name" value="PROTOHEME IX FARNESYLTRANSFERASE, MITOCHONDRIAL"/>
    <property type="match status" value="1"/>
</dbReference>
<dbReference type="Pfam" id="PF01040">
    <property type="entry name" value="UbiA"/>
    <property type="match status" value="1"/>
</dbReference>
<dbReference type="PROSITE" id="PS00943">
    <property type="entry name" value="UBIA"/>
    <property type="match status" value="1"/>
</dbReference>
<sequence length="296" mass="32248">MMFKQYLQVTKPGIIFGNLISVIGGFLLASKGSIDYPLFIYTLVGVSLVVASGCVFNNYIDRDIDRKMERTKNRVLVKGLISPAVSLVYATLLGIAGFMLLWFGANPLACWLGVMGFVVYVGVYSLYMKRHSVYGTLIGSLSGAAPPVIGYCAVTGEFDSGAAILLAIFSLWQMPHSYAIAIFRFKDYQAANIPVLPVVKGISVAKNHITLYIIAFAVATLMLSLGGYAGYKYLVVAAAVSVWWLGMALRGYKVADDRIWARKLFGFSIIAITALSVMMSVDFMVPDSHTLLAAVW</sequence>
<feature type="chain" id="PRO_0000345995" description="Protoheme IX farnesyltransferase">
    <location>
        <begin position="1"/>
        <end position="296"/>
    </location>
</feature>
<feature type="topological domain" description="Cytoplasmic" evidence="1">
    <location>
        <begin position="1"/>
        <end position="9"/>
    </location>
</feature>
<feature type="transmembrane region" description="Helical" evidence="1">
    <location>
        <begin position="10"/>
        <end position="28"/>
    </location>
</feature>
<feature type="topological domain" description="Periplasmic" evidence="1">
    <location>
        <begin position="29"/>
        <end position="37"/>
    </location>
</feature>
<feature type="transmembrane region" description="Helical" evidence="1">
    <location>
        <begin position="38"/>
        <end position="56"/>
    </location>
</feature>
<feature type="topological domain" description="Cytoplasmic" evidence="1">
    <location>
        <begin position="57"/>
        <end position="78"/>
    </location>
</feature>
<feature type="transmembrane region" description="Helical" evidence="1">
    <location>
        <begin position="79"/>
        <end position="97"/>
    </location>
</feature>
<feature type="topological domain" description="Periplasmic" evidence="1">
    <location>
        <begin position="98"/>
        <end position="107"/>
    </location>
</feature>
<feature type="transmembrane region" description="Helical" evidence="1">
    <location>
        <begin position="108"/>
        <end position="126"/>
    </location>
</feature>
<feature type="topological domain" description="Cytoplasmic" evidence="1">
    <location>
        <begin position="127"/>
        <end position="197"/>
    </location>
</feature>
<feature type="transmembrane region" description="Helical" evidence="1">
    <location>
        <begin position="198"/>
        <end position="216"/>
    </location>
</feature>
<feature type="topological domain" description="Periplasmic" evidence="1">
    <location>
        <begin position="217"/>
        <end position="228"/>
    </location>
</feature>
<feature type="transmembrane region" description="Helical" evidence="1">
    <location>
        <begin position="229"/>
        <end position="247"/>
    </location>
</feature>
<feature type="topological domain" description="Cytoplasmic" evidence="1">
    <location>
        <begin position="248"/>
        <end position="268"/>
    </location>
</feature>
<feature type="transmembrane region" description="Helical" evidence="1">
    <location>
        <begin position="269"/>
        <end position="287"/>
    </location>
</feature>
<feature type="topological domain" description="Periplasmic" evidence="1">
    <location>
        <begin position="288"/>
        <end position="296"/>
    </location>
</feature>
<accession>B1XFL6</accession>
<protein>
    <recommendedName>
        <fullName evidence="1">Protoheme IX farnesyltransferase</fullName>
        <ecNumber evidence="1">2.5.1.141</ecNumber>
    </recommendedName>
    <alternativeName>
        <fullName evidence="1">Heme B farnesyltransferase</fullName>
    </alternativeName>
    <alternativeName>
        <fullName evidence="1">Heme O synthase</fullName>
    </alternativeName>
</protein>
<comment type="function">
    <text evidence="1">Converts heme B (protoheme IX) to heme O by substitution of the vinyl group on carbon 2 of heme B porphyrin ring with a hydroxyethyl farnesyl side group.</text>
</comment>
<comment type="catalytic activity">
    <reaction evidence="1">
        <text>heme b + (2E,6E)-farnesyl diphosphate + H2O = Fe(II)-heme o + diphosphate</text>
        <dbReference type="Rhea" id="RHEA:28070"/>
        <dbReference type="ChEBI" id="CHEBI:15377"/>
        <dbReference type="ChEBI" id="CHEBI:33019"/>
        <dbReference type="ChEBI" id="CHEBI:60344"/>
        <dbReference type="ChEBI" id="CHEBI:60530"/>
        <dbReference type="ChEBI" id="CHEBI:175763"/>
        <dbReference type="EC" id="2.5.1.141"/>
    </reaction>
</comment>
<comment type="pathway">
    <text evidence="1">Porphyrin-containing compound metabolism; heme O biosynthesis; heme O from protoheme: step 1/1.</text>
</comment>
<comment type="subcellular location">
    <subcellularLocation>
        <location evidence="1">Cell inner membrane</location>
        <topology evidence="1">Multi-pass membrane protein</topology>
    </subcellularLocation>
</comment>
<comment type="miscellaneous">
    <text evidence="1">Carbon 2 of the heme B porphyrin ring is defined according to the Fischer nomenclature.</text>
</comment>
<comment type="similarity">
    <text evidence="1">Belongs to the UbiA prenyltransferase family. Protoheme IX farnesyltransferase subfamily.</text>
</comment>